<comment type="catalytic activity">
    <reaction>
        <text>a monocarboxylic acid amide + H2O = a monocarboxylate + NH4(+)</text>
        <dbReference type="Rhea" id="RHEA:12020"/>
        <dbReference type="ChEBI" id="CHEBI:15377"/>
        <dbReference type="ChEBI" id="CHEBI:28938"/>
        <dbReference type="ChEBI" id="CHEBI:35757"/>
        <dbReference type="ChEBI" id="CHEBI:83628"/>
        <dbReference type="EC" id="3.5.1.4"/>
    </reaction>
</comment>
<comment type="similarity">
    <text evidence="2">Belongs to the amidase family.</text>
</comment>
<feature type="chain" id="PRO_0000105254" description="Putative amidase AmiA2">
    <location>
        <begin position="1"/>
        <end position="484"/>
    </location>
</feature>
<feature type="active site" description="Charge relay system" evidence="1">
    <location>
        <position position="93"/>
    </location>
</feature>
<feature type="active site" description="Charge relay system" evidence="1">
    <location>
        <position position="167"/>
    </location>
</feature>
<feature type="active site" description="Acyl-ester intermediate" evidence="1">
    <location>
        <position position="191"/>
    </location>
</feature>
<name>AMIA2_MYCBO</name>
<sequence>MVGASGSDAGAISGSGNQRLPTLTDLLYQLATRAVTSEELVRRSLRAIDVSQPTLNAFRVVLTESALADAAAADKRRAAGDTAPLLGIPIAVKDDVDVAGVPTAFGTQGYVAPATDDCEVVRRLKAAGAVIVGKTNTCELGQWPFTSGPGFGHTRNPWSRRHTPGGSSGGSAAAVAAGLVTAAIGSDGAGSIRIPAAWTHLVGIKPQRGRISTWPLPEAFNGVTVNGVLARTVEDAALVLDAASGNVEGDRHQPPPVTVSDFVGIAPGPLKIALSTHFPYTGFRAKLHPEILAATQRVGDQLELLGHTVVKGNPDYGLRLSWNFLARSTAGLWEWAERLGDEVTLDRRTVSNLRMGHVLSQAILRSARRHEAADQRRVGSIFDIVDVVLAPTTAQPPPMARAFDRLGSFGTDRAIIAACPSTWPWNLLGWPSINVPAGFTSDGLPIGVQLMGPANSEGMLISLAAELEAVSGWATKQPQVWWTS</sequence>
<reference key="1">
    <citation type="journal article" date="2003" name="Proc. Natl. Acad. Sci. U.S.A.">
        <title>The complete genome sequence of Mycobacterium bovis.</title>
        <authorList>
            <person name="Garnier T."/>
            <person name="Eiglmeier K."/>
            <person name="Camus J.-C."/>
            <person name="Medina N."/>
            <person name="Mansoor H."/>
            <person name="Pryor M."/>
            <person name="Duthoy S."/>
            <person name="Grondin S."/>
            <person name="Lacroix C."/>
            <person name="Monsempe C."/>
            <person name="Simon S."/>
            <person name="Harris B."/>
            <person name="Atkin R."/>
            <person name="Doggett J."/>
            <person name="Mayes R."/>
            <person name="Keating L."/>
            <person name="Wheeler P.R."/>
            <person name="Parkhill J."/>
            <person name="Barrell B.G."/>
            <person name="Cole S.T."/>
            <person name="Gordon S.V."/>
            <person name="Hewinson R.G."/>
        </authorList>
    </citation>
    <scope>NUCLEOTIDE SEQUENCE [LARGE SCALE GENOMIC DNA]</scope>
    <source>
        <strain>ATCC BAA-935 / AF2122/97</strain>
    </source>
</reference>
<reference key="2">
    <citation type="journal article" date="2017" name="Genome Announc.">
        <title>Updated reference genome sequence and annotation of Mycobacterium bovis AF2122/97.</title>
        <authorList>
            <person name="Malone K.M."/>
            <person name="Farrell D."/>
            <person name="Stuber T.P."/>
            <person name="Schubert O.T."/>
            <person name="Aebersold R."/>
            <person name="Robbe-Austerman S."/>
            <person name="Gordon S.V."/>
        </authorList>
    </citation>
    <scope>NUCLEOTIDE SEQUENCE [LARGE SCALE GENOMIC DNA]</scope>
    <scope>GENOME REANNOTATION</scope>
    <source>
        <strain>ATCC BAA-935 / AF2122/97</strain>
    </source>
</reference>
<proteinExistence type="inferred from homology"/>
<gene>
    <name type="primary">amiA2</name>
    <name type="ordered locus">BQ2027_MB2384</name>
</gene>
<accession>P63491</accession>
<accession>A0A1R3Y176</accession>
<accession>O05835</accession>
<accession>X2BK85</accession>
<organism>
    <name type="scientific">Mycobacterium bovis (strain ATCC BAA-935 / AF2122/97)</name>
    <dbReference type="NCBI Taxonomy" id="233413"/>
    <lineage>
        <taxon>Bacteria</taxon>
        <taxon>Bacillati</taxon>
        <taxon>Actinomycetota</taxon>
        <taxon>Actinomycetes</taxon>
        <taxon>Mycobacteriales</taxon>
        <taxon>Mycobacteriaceae</taxon>
        <taxon>Mycobacterium</taxon>
        <taxon>Mycobacterium tuberculosis complex</taxon>
    </lineage>
</organism>
<keyword id="KW-0378">Hydrolase</keyword>
<keyword id="KW-1185">Reference proteome</keyword>
<protein>
    <recommendedName>
        <fullName>Putative amidase AmiA2</fullName>
        <ecNumber>3.5.1.4</ecNumber>
    </recommendedName>
</protein>
<dbReference type="EC" id="3.5.1.4"/>
<dbReference type="EMBL" id="LT708304">
    <property type="protein sequence ID" value="SIU00996.1"/>
    <property type="molecule type" value="Genomic_DNA"/>
</dbReference>
<dbReference type="RefSeq" id="NP_856033.1">
    <property type="nucleotide sequence ID" value="NC_002945.3"/>
</dbReference>
<dbReference type="RefSeq" id="WP_003412223.1">
    <property type="nucleotide sequence ID" value="NC_002945.4"/>
</dbReference>
<dbReference type="SMR" id="P63491"/>
<dbReference type="KEGG" id="mbo:BQ2027_MB2384"/>
<dbReference type="PATRIC" id="fig|233413.5.peg.2619"/>
<dbReference type="Proteomes" id="UP000001419">
    <property type="component" value="Chromosome"/>
</dbReference>
<dbReference type="GO" id="GO:0004040">
    <property type="term" value="F:amidase activity"/>
    <property type="evidence" value="ECO:0007669"/>
    <property type="project" value="UniProtKB-EC"/>
</dbReference>
<dbReference type="Gene3D" id="3.90.1300.10">
    <property type="entry name" value="Amidase signature (AS) domain"/>
    <property type="match status" value="1"/>
</dbReference>
<dbReference type="InterPro" id="IPR000120">
    <property type="entry name" value="Amidase"/>
</dbReference>
<dbReference type="InterPro" id="IPR020556">
    <property type="entry name" value="Amidase_CS"/>
</dbReference>
<dbReference type="InterPro" id="IPR023631">
    <property type="entry name" value="Amidase_dom"/>
</dbReference>
<dbReference type="InterPro" id="IPR036928">
    <property type="entry name" value="AS_sf"/>
</dbReference>
<dbReference type="NCBIfam" id="NF004717">
    <property type="entry name" value="PRK06061.1"/>
    <property type="match status" value="1"/>
</dbReference>
<dbReference type="PANTHER" id="PTHR11895:SF7">
    <property type="entry name" value="GLUTAMYL-TRNA(GLN) AMIDOTRANSFERASE SUBUNIT A, MITOCHONDRIAL"/>
    <property type="match status" value="1"/>
</dbReference>
<dbReference type="PANTHER" id="PTHR11895">
    <property type="entry name" value="TRANSAMIDASE"/>
    <property type="match status" value="1"/>
</dbReference>
<dbReference type="Pfam" id="PF01425">
    <property type="entry name" value="Amidase"/>
    <property type="match status" value="1"/>
</dbReference>
<dbReference type="SUPFAM" id="SSF75304">
    <property type="entry name" value="Amidase signature (AS) enzymes"/>
    <property type="match status" value="1"/>
</dbReference>
<dbReference type="PROSITE" id="PS00571">
    <property type="entry name" value="AMIDASES"/>
    <property type="match status" value="1"/>
</dbReference>
<evidence type="ECO:0000250" key="1"/>
<evidence type="ECO:0000305" key="2"/>